<dbReference type="EC" id="2.3.1.48" evidence="1"/>
<dbReference type="EMBL" id="X62868">
    <property type="protein sequence ID" value="CAA44668.1"/>
    <property type="molecule type" value="mRNA"/>
</dbReference>
<dbReference type="EMBL" id="BC077495">
    <property type="protein sequence ID" value="AAH77495.1"/>
    <property type="molecule type" value="mRNA"/>
</dbReference>
<dbReference type="PIR" id="S20071">
    <property type="entry name" value="S20071"/>
</dbReference>
<dbReference type="RefSeq" id="NP_001081115.1">
    <property type="nucleotide sequence ID" value="NM_001087646.1"/>
</dbReference>
<dbReference type="SMR" id="P29054"/>
<dbReference type="GeneID" id="394390"/>
<dbReference type="KEGG" id="xla:394390"/>
<dbReference type="AGR" id="Xenbase:XB-GENE-6254425"/>
<dbReference type="CTD" id="394390"/>
<dbReference type="Xenbase" id="XB-GENE-6254425">
    <property type="gene designation" value="gtf2b.L"/>
</dbReference>
<dbReference type="OMA" id="DHDQRMK"/>
<dbReference type="OrthoDB" id="25790at2759"/>
<dbReference type="Proteomes" id="UP000186698">
    <property type="component" value="Chromosome 4L"/>
</dbReference>
<dbReference type="Bgee" id="394390">
    <property type="expression patterns" value="Expressed in ovary and 19 other cell types or tissues"/>
</dbReference>
<dbReference type="GO" id="GO:0005694">
    <property type="term" value="C:chromosome"/>
    <property type="evidence" value="ECO:0000250"/>
    <property type="project" value="UniProtKB"/>
</dbReference>
<dbReference type="GO" id="GO:0005634">
    <property type="term" value="C:nucleus"/>
    <property type="evidence" value="ECO:0000250"/>
    <property type="project" value="UniProtKB"/>
</dbReference>
<dbReference type="GO" id="GO:0032993">
    <property type="term" value="C:protein-DNA complex"/>
    <property type="evidence" value="ECO:0000250"/>
    <property type="project" value="UniProtKB"/>
</dbReference>
<dbReference type="GO" id="GO:0097550">
    <property type="term" value="C:transcription preinitiation complex"/>
    <property type="evidence" value="ECO:0000318"/>
    <property type="project" value="GO_Central"/>
</dbReference>
<dbReference type="GO" id="GO:0016407">
    <property type="term" value="F:acetyltransferase activity"/>
    <property type="evidence" value="ECO:0000250"/>
    <property type="project" value="UniProtKB"/>
</dbReference>
<dbReference type="GO" id="GO:0004402">
    <property type="term" value="F:histone acetyltransferase activity"/>
    <property type="evidence" value="ECO:0007669"/>
    <property type="project" value="UniProtKB-EC"/>
</dbReference>
<dbReference type="GO" id="GO:1990841">
    <property type="term" value="F:promoter-specific chromatin binding"/>
    <property type="evidence" value="ECO:0000250"/>
    <property type="project" value="UniProtKB"/>
</dbReference>
<dbReference type="GO" id="GO:0000993">
    <property type="term" value="F:RNA polymerase II complex binding"/>
    <property type="evidence" value="ECO:0000250"/>
    <property type="project" value="UniProtKB"/>
</dbReference>
<dbReference type="GO" id="GO:0000979">
    <property type="term" value="F:RNA polymerase II core promoter sequence-specific DNA binding"/>
    <property type="evidence" value="ECO:0000250"/>
    <property type="project" value="UniProtKB"/>
</dbReference>
<dbReference type="GO" id="GO:0016251">
    <property type="term" value="F:RNA polymerase II general transcription initiation factor activity"/>
    <property type="evidence" value="ECO:0000318"/>
    <property type="project" value="GO_Central"/>
</dbReference>
<dbReference type="GO" id="GO:0017025">
    <property type="term" value="F:TBP-class protein binding"/>
    <property type="evidence" value="ECO:0000318"/>
    <property type="project" value="GO_Central"/>
</dbReference>
<dbReference type="GO" id="GO:0008270">
    <property type="term" value="F:zinc ion binding"/>
    <property type="evidence" value="ECO:0000250"/>
    <property type="project" value="UniProtKB"/>
</dbReference>
<dbReference type="GO" id="GO:0006352">
    <property type="term" value="P:DNA-templated transcription initiation"/>
    <property type="evidence" value="ECO:0000318"/>
    <property type="project" value="GO_Central"/>
</dbReference>
<dbReference type="GO" id="GO:0006473">
    <property type="term" value="P:protein acetylation"/>
    <property type="evidence" value="ECO:0000250"/>
    <property type="project" value="UniProtKB"/>
</dbReference>
<dbReference type="GO" id="GO:1990114">
    <property type="term" value="P:RNA polymerase II core complex assembly"/>
    <property type="evidence" value="ECO:0000250"/>
    <property type="project" value="UniProtKB"/>
</dbReference>
<dbReference type="GO" id="GO:0051123">
    <property type="term" value="P:RNA polymerase II preinitiation complex assembly"/>
    <property type="evidence" value="ECO:0000250"/>
    <property type="project" value="UniProtKB"/>
</dbReference>
<dbReference type="GO" id="GO:0006366">
    <property type="term" value="P:transcription by RNA polymerase II"/>
    <property type="evidence" value="ECO:0000250"/>
    <property type="project" value="UniProtKB"/>
</dbReference>
<dbReference type="GO" id="GO:0006367">
    <property type="term" value="P:transcription initiation at RNA polymerase II promoter"/>
    <property type="evidence" value="ECO:0000250"/>
    <property type="project" value="UniProtKB"/>
</dbReference>
<dbReference type="GO" id="GO:0001174">
    <property type="term" value="P:transcriptional start site selection at RNA polymerase II promoter"/>
    <property type="evidence" value="ECO:0000250"/>
    <property type="project" value="UniProtKB"/>
</dbReference>
<dbReference type="GO" id="GO:0019083">
    <property type="term" value="P:viral transcription"/>
    <property type="evidence" value="ECO:0000250"/>
    <property type="project" value="UniProtKB"/>
</dbReference>
<dbReference type="CDD" id="cd20551">
    <property type="entry name" value="CYCLIN_TFIIB_rpt1"/>
    <property type="match status" value="1"/>
</dbReference>
<dbReference type="CDD" id="cd20552">
    <property type="entry name" value="CYCLIN_TFIIB_rpt2"/>
    <property type="match status" value="1"/>
</dbReference>
<dbReference type="FunFam" id="1.10.472.10:FF:000008">
    <property type="entry name" value="Transcription initiation factor IIB"/>
    <property type="match status" value="1"/>
</dbReference>
<dbReference type="FunFam" id="1.10.472.170:FF:000003">
    <property type="entry name" value="Transcription initiation factor IIB"/>
    <property type="match status" value="1"/>
</dbReference>
<dbReference type="FunFam" id="2.20.25.10:FF:000007">
    <property type="entry name" value="Transcription initiation factor IIB"/>
    <property type="match status" value="1"/>
</dbReference>
<dbReference type="FunFam" id="1.10.472.10:FF:000019">
    <property type="entry name" value="transcription initiation factor IIB"/>
    <property type="match status" value="1"/>
</dbReference>
<dbReference type="Gene3D" id="2.20.25.10">
    <property type="match status" value="1"/>
</dbReference>
<dbReference type="Gene3D" id="1.10.472.10">
    <property type="entry name" value="Cyclin-like"/>
    <property type="match status" value="2"/>
</dbReference>
<dbReference type="InterPro" id="IPR013763">
    <property type="entry name" value="Cyclin-like_dom"/>
</dbReference>
<dbReference type="InterPro" id="IPR036915">
    <property type="entry name" value="Cyclin-like_sf"/>
</dbReference>
<dbReference type="InterPro" id="IPR000812">
    <property type="entry name" value="TFIIB"/>
</dbReference>
<dbReference type="InterPro" id="IPR023486">
    <property type="entry name" value="TFIIB_CS"/>
</dbReference>
<dbReference type="InterPro" id="IPR013150">
    <property type="entry name" value="TFIIB_cyclin"/>
</dbReference>
<dbReference type="InterPro" id="IPR013137">
    <property type="entry name" value="Znf_TFIIB"/>
</dbReference>
<dbReference type="PANTHER" id="PTHR11618:SF77">
    <property type="entry name" value="TRANSCRIPTION INITIATION FACTOR IIB"/>
    <property type="match status" value="1"/>
</dbReference>
<dbReference type="PANTHER" id="PTHR11618">
    <property type="entry name" value="TRANSCRIPTION INITIATION FACTOR IIB-RELATED"/>
    <property type="match status" value="1"/>
</dbReference>
<dbReference type="Pfam" id="PF00382">
    <property type="entry name" value="TFIIB"/>
    <property type="match status" value="2"/>
</dbReference>
<dbReference type="Pfam" id="PF08271">
    <property type="entry name" value="Zn_Ribbon_TF"/>
    <property type="match status" value="1"/>
</dbReference>
<dbReference type="PRINTS" id="PR00685">
    <property type="entry name" value="TIFACTORIIB"/>
</dbReference>
<dbReference type="SMART" id="SM00385">
    <property type="entry name" value="CYCLIN"/>
    <property type="match status" value="2"/>
</dbReference>
<dbReference type="SUPFAM" id="SSF47954">
    <property type="entry name" value="Cyclin-like"/>
    <property type="match status" value="2"/>
</dbReference>
<dbReference type="SUPFAM" id="SSF57783">
    <property type="entry name" value="Zinc beta-ribbon"/>
    <property type="match status" value="1"/>
</dbReference>
<dbReference type="PROSITE" id="PS00782">
    <property type="entry name" value="TFIIB"/>
    <property type="match status" value="2"/>
</dbReference>
<dbReference type="PROSITE" id="PS51134">
    <property type="entry name" value="ZF_TFIIB"/>
    <property type="match status" value="1"/>
</dbReference>
<name>TF2B_XENLA</name>
<protein>
    <recommendedName>
        <fullName evidence="1">Transcription initiation factor IIB</fullName>
        <ecNumber evidence="1">2.3.1.48</ecNumber>
    </recommendedName>
    <alternativeName>
        <fullName evidence="1">General transcription factor TFIIB</fullName>
    </alternativeName>
</protein>
<reference key="1">
    <citation type="journal article" date="1991" name="Nucleic Acids Res.">
        <title>Conserved structural motifs between Xenopus and human TFIIB.</title>
        <authorList>
            <person name="Hisatake K."/>
            <person name="Malik S."/>
            <person name="Roeder R.G."/>
            <person name="Horikoshi M."/>
        </authorList>
    </citation>
    <scope>NUCLEOTIDE SEQUENCE [MRNA]</scope>
</reference>
<reference key="2">
    <citation type="submission" date="2004-07" db="EMBL/GenBank/DDBJ databases">
        <authorList>
            <consortium name="NIH - Xenopus Gene Collection (XGC) project"/>
        </authorList>
    </citation>
    <scope>NUCLEOTIDE SEQUENCE [LARGE SCALE MRNA]</scope>
    <source>
        <tissue>Ovary</tissue>
    </source>
</reference>
<keyword id="KW-0012">Acyltransferase</keyword>
<keyword id="KW-0158">Chromosome</keyword>
<keyword id="KW-0238">DNA-binding</keyword>
<keyword id="KW-0479">Metal-binding</keyword>
<keyword id="KW-0539">Nucleus</keyword>
<keyword id="KW-1185">Reference proteome</keyword>
<keyword id="KW-0677">Repeat</keyword>
<keyword id="KW-0804">Transcription</keyword>
<keyword id="KW-0805">Transcription regulation</keyword>
<keyword id="KW-0808">Transferase</keyword>
<keyword id="KW-0862">Zinc</keyword>
<keyword id="KW-0863">Zinc-finger</keyword>
<evidence type="ECO:0000250" key="1">
    <source>
        <dbReference type="UniProtKB" id="Q00403"/>
    </source>
</evidence>
<evidence type="ECO:0000255" key="2">
    <source>
        <dbReference type="PROSITE-ProRule" id="PRU00469"/>
    </source>
</evidence>
<evidence type="ECO:0000305" key="3"/>
<gene>
    <name evidence="1" type="primary">gtf2b</name>
</gene>
<sequence length="316" mass="34678">MASTSRIDALPKVTCPNHPDALLVEDYRAGDMICSECGLVVGDRVIDVGSEWRTFSNDKAAADPSRVGDAQNPLLSGGDLTTMIGKGTGSASFDEFGNSKYQNRRTMSSSDRAMMNAFKEITNMSDRINLPRNIIDRTNNLFKQVYEQKSLKGRSNDAIASACLYIACRQEGVPRTFKEICAVSRISKKEIGRCFKLILKALETNVDLITTGDFMSRFCSNLGLTKQVQMAATHIARKAVELDLVPGRSPISVAAAAIYMASQASAEKRTQKEIGDIAGVADVTIRQSYRLIYPRAPDLFPADFKFDTPVDKLPQL</sequence>
<accession>P29054</accession>
<accession>Q6AZP6</accession>
<proteinExistence type="evidence at transcript level"/>
<feature type="chain" id="PRO_0000119297" description="Transcription initiation factor IIB">
    <location>
        <begin position="1"/>
        <end position="316"/>
    </location>
</feature>
<feature type="repeat" description="1">
    <location>
        <begin position="124"/>
        <end position="200"/>
    </location>
</feature>
<feature type="repeat" description="2">
    <location>
        <begin position="218"/>
        <end position="294"/>
    </location>
</feature>
<feature type="zinc finger region" description="TFIIB-type" evidence="2">
    <location>
        <begin position="11"/>
        <end position="42"/>
    </location>
</feature>
<feature type="binding site" evidence="2">
    <location>
        <position position="15"/>
    </location>
    <ligand>
        <name>Zn(2+)</name>
        <dbReference type="ChEBI" id="CHEBI:29105"/>
    </ligand>
</feature>
<feature type="binding site" evidence="2">
    <location>
        <position position="18"/>
    </location>
    <ligand>
        <name>Zn(2+)</name>
        <dbReference type="ChEBI" id="CHEBI:29105"/>
    </ligand>
</feature>
<feature type="binding site" evidence="2">
    <location>
        <position position="34"/>
    </location>
    <ligand>
        <name>Zn(2+)</name>
        <dbReference type="ChEBI" id="CHEBI:29105"/>
    </ligand>
</feature>
<feature type="binding site" evidence="2">
    <location>
        <position position="37"/>
    </location>
    <ligand>
        <name>Zn(2+)</name>
        <dbReference type="ChEBI" id="CHEBI:29105"/>
    </ligand>
</feature>
<comment type="function">
    <text evidence="1">General transcription factor that plays a role in transcription initiation by RNA polymerase II (Pol II). Involved in the pre-initiation complex (PIC) formation and Pol II recruitment at promoter DNA. Together with the TATA box-bound TBP forms the core initiation complex and provides a bridge between TBP and the Pol II-TFIIF complex. Released from the PIC early following the onset of transcription during the initiation and elongation transition and reassociates with TBP during the next transcription cycle. Associates with chromatin to core promoter-specific regions. Binds to two distinct DNA core promoter consensus sequence elements in a TBP-independent manner; these IIB-recognition elements (BREs) are localized immediately upstream (BREu), 5'-[GC][GC][GA]CGCC-3', and downstream (BREd), 5'-[GA]T[TGA][TG][GT][TG][TG]-3', of the TATA box element. Modulates transcription start site selection. Also exhibits autoacetyltransferase activity that contributes to the activated transcription.</text>
</comment>
<comment type="catalytic activity">
    <reaction evidence="1">
        <text>L-lysyl-[protein] + acetyl-CoA = N(6)-acetyl-L-lysyl-[protein] + CoA + H(+)</text>
        <dbReference type="Rhea" id="RHEA:45948"/>
        <dbReference type="Rhea" id="RHEA-COMP:9752"/>
        <dbReference type="Rhea" id="RHEA-COMP:10731"/>
        <dbReference type="ChEBI" id="CHEBI:15378"/>
        <dbReference type="ChEBI" id="CHEBI:29969"/>
        <dbReference type="ChEBI" id="CHEBI:57287"/>
        <dbReference type="ChEBI" id="CHEBI:57288"/>
        <dbReference type="ChEBI" id="CHEBI:61930"/>
        <dbReference type="EC" id="2.3.1.48"/>
    </reaction>
</comment>
<comment type="subcellular location">
    <subcellularLocation>
        <location evidence="1">Nucleus</location>
    </subcellularLocation>
    <subcellularLocation>
        <location evidence="1">Chromosome</location>
    </subcellularLocation>
    <text evidence="1">Non-acetylated form colocalizes with DNA in the G0/1, S and G2 phases of the cell cycle, but not during mitosis. Acetylated form colocalizes at transcriptionally silent mitotic chromatids during mitosis at metaphase, anaphase, and telophase phases of the cell cycle.</text>
</comment>
<comment type="domain">
    <text evidence="1">The zinc-binding domain is necessary for the interaction and recruitment of RNA polymerase II to the core promoter, the formation of a fully competent pre-initiation complex (PIC) assembly and basal transcription initiation. The C-terminus is necessary and sufficient for interaction with the TATA box-bound TBP complex and for the formation of PIC.</text>
</comment>
<comment type="similarity">
    <text evidence="3">Belongs to the TFIIB family.</text>
</comment>
<organism>
    <name type="scientific">Xenopus laevis</name>
    <name type="common">African clawed frog</name>
    <dbReference type="NCBI Taxonomy" id="8355"/>
    <lineage>
        <taxon>Eukaryota</taxon>
        <taxon>Metazoa</taxon>
        <taxon>Chordata</taxon>
        <taxon>Craniata</taxon>
        <taxon>Vertebrata</taxon>
        <taxon>Euteleostomi</taxon>
        <taxon>Amphibia</taxon>
        <taxon>Batrachia</taxon>
        <taxon>Anura</taxon>
        <taxon>Pipoidea</taxon>
        <taxon>Pipidae</taxon>
        <taxon>Xenopodinae</taxon>
        <taxon>Xenopus</taxon>
        <taxon>Xenopus</taxon>
    </lineage>
</organism>